<gene>
    <name type="primary">SOD1</name>
    <name type="ordered locus">CAGL0C04741g</name>
</gene>
<feature type="initiator methionine" description="Removed" evidence="2">
    <location>
        <position position="1"/>
    </location>
</feature>
<feature type="chain" id="PRO_0000164113" description="Superoxide dismutase [Cu-Zn]">
    <location>
        <begin position="2"/>
        <end position="154"/>
    </location>
</feature>
<feature type="region of interest" description="Disordered" evidence="4">
    <location>
        <begin position="125"/>
        <end position="144"/>
    </location>
</feature>
<feature type="compositionally biased region" description="Basic and acidic residues" evidence="4">
    <location>
        <begin position="125"/>
        <end position="136"/>
    </location>
</feature>
<feature type="binding site" evidence="2">
    <location>
        <position position="47"/>
    </location>
    <ligand>
        <name>Cu cation</name>
        <dbReference type="ChEBI" id="CHEBI:23378"/>
        <note>catalytic</note>
    </ligand>
</feature>
<feature type="binding site" evidence="2">
    <location>
        <position position="49"/>
    </location>
    <ligand>
        <name>Cu cation</name>
        <dbReference type="ChEBI" id="CHEBI:23378"/>
        <note>catalytic</note>
    </ligand>
</feature>
<feature type="binding site" evidence="2">
    <location>
        <position position="64"/>
    </location>
    <ligand>
        <name>Cu cation</name>
        <dbReference type="ChEBI" id="CHEBI:23378"/>
        <note>catalytic</note>
    </ligand>
</feature>
<feature type="binding site" evidence="2">
    <location>
        <position position="64"/>
    </location>
    <ligand>
        <name>Zn(2+)</name>
        <dbReference type="ChEBI" id="CHEBI:29105"/>
        <note>structural</note>
    </ligand>
</feature>
<feature type="binding site" evidence="2">
    <location>
        <position position="72"/>
    </location>
    <ligand>
        <name>Zn(2+)</name>
        <dbReference type="ChEBI" id="CHEBI:29105"/>
        <note>structural</note>
    </ligand>
</feature>
<feature type="binding site" evidence="2">
    <location>
        <position position="81"/>
    </location>
    <ligand>
        <name>Zn(2+)</name>
        <dbReference type="ChEBI" id="CHEBI:29105"/>
        <note>structural</note>
    </ligand>
</feature>
<feature type="binding site" evidence="2">
    <location>
        <position position="84"/>
    </location>
    <ligand>
        <name>Zn(2+)</name>
        <dbReference type="ChEBI" id="CHEBI:29105"/>
        <note>structural</note>
    </ligand>
</feature>
<feature type="binding site" evidence="2">
    <location>
        <position position="121"/>
    </location>
    <ligand>
        <name>Cu cation</name>
        <dbReference type="ChEBI" id="CHEBI:23378"/>
        <note>catalytic</note>
    </ligand>
</feature>
<feature type="binding site" evidence="2">
    <location>
        <position position="144"/>
    </location>
    <ligand>
        <name>substrate</name>
    </ligand>
</feature>
<feature type="disulfide bond" evidence="2">
    <location>
        <begin position="58"/>
        <end position="147"/>
    </location>
</feature>
<protein>
    <recommendedName>
        <fullName>Superoxide dismutase [Cu-Zn]</fullName>
        <ecNumber evidence="3">1.15.1.1</ecNumber>
    </recommendedName>
</protein>
<dbReference type="EC" id="1.15.1.1" evidence="3"/>
<dbReference type="EMBL" id="CR380949">
    <property type="protein sequence ID" value="CAG58285.1"/>
    <property type="molecule type" value="Genomic_DNA"/>
</dbReference>
<dbReference type="RefSeq" id="XP_445379.1">
    <property type="nucleotide sequence ID" value="XM_445379.1"/>
</dbReference>
<dbReference type="SMR" id="Q6FWL5"/>
<dbReference type="FunCoup" id="Q6FWL5">
    <property type="interactions" value="853"/>
</dbReference>
<dbReference type="STRING" id="284593.Q6FWL5"/>
<dbReference type="EnsemblFungi" id="CAGL0C04741g-T">
    <property type="protein sequence ID" value="CAGL0C04741g-T-p1"/>
    <property type="gene ID" value="CAGL0C04741g"/>
</dbReference>
<dbReference type="GeneID" id="2886862"/>
<dbReference type="KEGG" id="cgr:2886862"/>
<dbReference type="CGD" id="CAL0127282">
    <property type="gene designation" value="SOD1"/>
</dbReference>
<dbReference type="VEuPathDB" id="FungiDB:B1J91_C04741g"/>
<dbReference type="VEuPathDB" id="FungiDB:CAGL0C04741g"/>
<dbReference type="eggNOG" id="KOG0441">
    <property type="taxonomic scope" value="Eukaryota"/>
</dbReference>
<dbReference type="HOGENOM" id="CLU_056632_4_2_1"/>
<dbReference type="InParanoid" id="Q6FWL5"/>
<dbReference type="OMA" id="AQRGFHI"/>
<dbReference type="Proteomes" id="UP000002428">
    <property type="component" value="Chromosome C"/>
</dbReference>
<dbReference type="GO" id="GO:0005829">
    <property type="term" value="C:cytosol"/>
    <property type="evidence" value="ECO:0000314"/>
    <property type="project" value="CGD"/>
</dbReference>
<dbReference type="GO" id="GO:0005576">
    <property type="term" value="C:extracellular region"/>
    <property type="evidence" value="ECO:0000314"/>
    <property type="project" value="CGD"/>
</dbReference>
<dbReference type="GO" id="GO:0005758">
    <property type="term" value="C:mitochondrial intermembrane space"/>
    <property type="evidence" value="ECO:0007669"/>
    <property type="project" value="EnsemblFungi"/>
</dbReference>
<dbReference type="GO" id="GO:0005634">
    <property type="term" value="C:nucleus"/>
    <property type="evidence" value="ECO:0007669"/>
    <property type="project" value="EnsemblFungi"/>
</dbReference>
<dbReference type="GO" id="GO:1902693">
    <property type="term" value="C:superoxide dismutase complex"/>
    <property type="evidence" value="ECO:0007669"/>
    <property type="project" value="EnsemblFungi"/>
</dbReference>
<dbReference type="GO" id="GO:0005507">
    <property type="term" value="F:copper ion binding"/>
    <property type="evidence" value="ECO:0007669"/>
    <property type="project" value="InterPro"/>
</dbReference>
<dbReference type="GO" id="GO:0016670">
    <property type="term" value="F:oxidoreductase activity, acting on a sulfur group of donors, oxygen as acceptor"/>
    <property type="evidence" value="ECO:0007669"/>
    <property type="project" value="EnsemblFungi"/>
</dbReference>
<dbReference type="GO" id="GO:0004784">
    <property type="term" value="F:superoxide dismutase activity"/>
    <property type="evidence" value="ECO:0007669"/>
    <property type="project" value="UniProtKB-EC"/>
</dbReference>
<dbReference type="GO" id="GO:0045454">
    <property type="term" value="P:cell redox homeostasis"/>
    <property type="evidence" value="ECO:0007669"/>
    <property type="project" value="EnsemblFungi"/>
</dbReference>
<dbReference type="GO" id="GO:0034599">
    <property type="term" value="P:cellular response to oxidative stress"/>
    <property type="evidence" value="ECO:0000315"/>
    <property type="project" value="CGD"/>
</dbReference>
<dbReference type="GO" id="GO:0006825">
    <property type="term" value="P:copper ion transport"/>
    <property type="evidence" value="ECO:0007669"/>
    <property type="project" value="EnsemblFungi"/>
</dbReference>
<dbReference type="GO" id="GO:0031505">
    <property type="term" value="P:fungal-type cell wall organization"/>
    <property type="evidence" value="ECO:0007669"/>
    <property type="project" value="EnsemblFungi"/>
</dbReference>
<dbReference type="GO" id="GO:0006878">
    <property type="term" value="P:intracellular copper ion homeostasis"/>
    <property type="evidence" value="ECO:0007669"/>
    <property type="project" value="EnsemblFungi"/>
</dbReference>
<dbReference type="GO" id="GO:0006882">
    <property type="term" value="P:intracellular zinc ion homeostasis"/>
    <property type="evidence" value="ECO:0007669"/>
    <property type="project" value="EnsemblFungi"/>
</dbReference>
<dbReference type="GO" id="GO:1901856">
    <property type="term" value="P:negative regulation of cellular respiration"/>
    <property type="evidence" value="ECO:0007669"/>
    <property type="project" value="EnsemblFungi"/>
</dbReference>
<dbReference type="GO" id="GO:0045944">
    <property type="term" value="P:positive regulation of transcription by RNA polymerase II"/>
    <property type="evidence" value="ECO:0007669"/>
    <property type="project" value="EnsemblFungi"/>
</dbReference>
<dbReference type="GO" id="GO:0050821">
    <property type="term" value="P:protein stabilization"/>
    <property type="evidence" value="ECO:0007669"/>
    <property type="project" value="EnsemblFungi"/>
</dbReference>
<dbReference type="CDD" id="cd00305">
    <property type="entry name" value="Cu-Zn_Superoxide_Dismutase"/>
    <property type="match status" value="1"/>
</dbReference>
<dbReference type="FunFam" id="2.60.40.200:FF:000001">
    <property type="entry name" value="Superoxide dismutase [Cu-Zn]"/>
    <property type="match status" value="1"/>
</dbReference>
<dbReference type="Gene3D" id="2.60.40.200">
    <property type="entry name" value="Superoxide dismutase, copper/zinc binding domain"/>
    <property type="match status" value="1"/>
</dbReference>
<dbReference type="InterPro" id="IPR036423">
    <property type="entry name" value="SOD-like_Cu/Zn_dom_sf"/>
</dbReference>
<dbReference type="InterPro" id="IPR024134">
    <property type="entry name" value="SOD_Cu/Zn_/chaperone"/>
</dbReference>
<dbReference type="InterPro" id="IPR018152">
    <property type="entry name" value="SOD_Cu/Zn_BS"/>
</dbReference>
<dbReference type="InterPro" id="IPR001424">
    <property type="entry name" value="SOD_Cu_Zn_dom"/>
</dbReference>
<dbReference type="PANTHER" id="PTHR10003">
    <property type="entry name" value="SUPEROXIDE DISMUTASE CU-ZN -RELATED"/>
    <property type="match status" value="1"/>
</dbReference>
<dbReference type="Pfam" id="PF00080">
    <property type="entry name" value="Sod_Cu"/>
    <property type="match status" value="1"/>
</dbReference>
<dbReference type="PRINTS" id="PR00068">
    <property type="entry name" value="CUZNDISMTASE"/>
</dbReference>
<dbReference type="SUPFAM" id="SSF49329">
    <property type="entry name" value="Cu,Zn superoxide dismutase-like"/>
    <property type="match status" value="1"/>
</dbReference>
<dbReference type="PROSITE" id="PS00087">
    <property type="entry name" value="SOD_CU_ZN_1"/>
    <property type="match status" value="1"/>
</dbReference>
<dbReference type="PROSITE" id="PS00332">
    <property type="entry name" value="SOD_CU_ZN_2"/>
    <property type="match status" value="1"/>
</dbReference>
<reference key="1">
    <citation type="journal article" date="2004" name="Nature">
        <title>Genome evolution in yeasts.</title>
        <authorList>
            <person name="Dujon B."/>
            <person name="Sherman D."/>
            <person name="Fischer G."/>
            <person name="Durrens P."/>
            <person name="Casaregola S."/>
            <person name="Lafontaine I."/>
            <person name="de Montigny J."/>
            <person name="Marck C."/>
            <person name="Neuveglise C."/>
            <person name="Talla E."/>
            <person name="Goffard N."/>
            <person name="Frangeul L."/>
            <person name="Aigle M."/>
            <person name="Anthouard V."/>
            <person name="Babour A."/>
            <person name="Barbe V."/>
            <person name="Barnay S."/>
            <person name="Blanchin S."/>
            <person name="Beckerich J.-M."/>
            <person name="Beyne E."/>
            <person name="Bleykasten C."/>
            <person name="Boisrame A."/>
            <person name="Boyer J."/>
            <person name="Cattolico L."/>
            <person name="Confanioleri F."/>
            <person name="de Daruvar A."/>
            <person name="Despons L."/>
            <person name="Fabre E."/>
            <person name="Fairhead C."/>
            <person name="Ferry-Dumazet H."/>
            <person name="Groppi A."/>
            <person name="Hantraye F."/>
            <person name="Hennequin C."/>
            <person name="Jauniaux N."/>
            <person name="Joyet P."/>
            <person name="Kachouri R."/>
            <person name="Kerrest A."/>
            <person name="Koszul R."/>
            <person name="Lemaire M."/>
            <person name="Lesur I."/>
            <person name="Ma L."/>
            <person name="Muller H."/>
            <person name="Nicaud J.-M."/>
            <person name="Nikolski M."/>
            <person name="Oztas S."/>
            <person name="Ozier-Kalogeropoulos O."/>
            <person name="Pellenz S."/>
            <person name="Potier S."/>
            <person name="Richard G.-F."/>
            <person name="Straub M.-L."/>
            <person name="Suleau A."/>
            <person name="Swennen D."/>
            <person name="Tekaia F."/>
            <person name="Wesolowski-Louvel M."/>
            <person name="Westhof E."/>
            <person name="Wirth B."/>
            <person name="Zeniou-Meyer M."/>
            <person name="Zivanovic Y."/>
            <person name="Bolotin-Fukuhara M."/>
            <person name="Thierry A."/>
            <person name="Bouchier C."/>
            <person name="Caudron B."/>
            <person name="Scarpelli C."/>
            <person name="Gaillardin C."/>
            <person name="Weissenbach J."/>
            <person name="Wincker P."/>
            <person name="Souciet J.-L."/>
        </authorList>
    </citation>
    <scope>NUCLEOTIDE SEQUENCE [LARGE SCALE GENOMIC DNA]</scope>
    <source>
        <strain>ATCC 2001 / BCRC 20586 / JCM 3761 / NBRC 0622 / NRRL Y-65 / CBS 138</strain>
    </source>
</reference>
<accession>Q6FWL5</accession>
<comment type="function">
    <text evidence="1">Destroys radicals which are normally produced within the cells and which are toxic to biological systems.</text>
</comment>
<comment type="catalytic activity">
    <reaction evidence="3">
        <text>2 superoxide + 2 H(+) = H2O2 + O2</text>
        <dbReference type="Rhea" id="RHEA:20696"/>
        <dbReference type="ChEBI" id="CHEBI:15378"/>
        <dbReference type="ChEBI" id="CHEBI:15379"/>
        <dbReference type="ChEBI" id="CHEBI:16240"/>
        <dbReference type="ChEBI" id="CHEBI:18421"/>
        <dbReference type="EC" id="1.15.1.1"/>
    </reaction>
</comment>
<comment type="cofactor">
    <cofactor evidence="2">
        <name>Cu cation</name>
        <dbReference type="ChEBI" id="CHEBI:23378"/>
    </cofactor>
    <text evidence="2">Binds 1 copper ion per subunit.</text>
</comment>
<comment type="cofactor">
    <cofactor evidence="2">
        <name>Zn(2+)</name>
        <dbReference type="ChEBI" id="CHEBI:29105"/>
    </cofactor>
    <text evidence="2">Binds 1 zinc ion per subunit.</text>
</comment>
<comment type="subunit">
    <text evidence="3">Homodimer.</text>
</comment>
<comment type="subcellular location">
    <subcellularLocation>
        <location evidence="2">Cytoplasm</location>
    </subcellularLocation>
</comment>
<comment type="similarity">
    <text evidence="5">Belongs to the Cu-Zn superoxide dismutase family.</text>
</comment>
<evidence type="ECO:0000250" key="1">
    <source>
        <dbReference type="UniProtKB" id="P00442"/>
    </source>
</evidence>
<evidence type="ECO:0000250" key="2">
    <source>
        <dbReference type="UniProtKB" id="P00445"/>
    </source>
</evidence>
<evidence type="ECO:0000250" key="3">
    <source>
        <dbReference type="UniProtKB" id="P85978"/>
    </source>
</evidence>
<evidence type="ECO:0000256" key="4">
    <source>
        <dbReference type="SAM" id="MobiDB-lite"/>
    </source>
</evidence>
<evidence type="ECO:0000305" key="5"/>
<keyword id="KW-0049">Antioxidant</keyword>
<keyword id="KW-0186">Copper</keyword>
<keyword id="KW-0963">Cytoplasm</keyword>
<keyword id="KW-1015">Disulfide bond</keyword>
<keyword id="KW-0479">Metal-binding</keyword>
<keyword id="KW-0560">Oxidoreductase</keyword>
<keyword id="KW-1185">Reference proteome</keyword>
<keyword id="KW-0862">Zinc</keyword>
<proteinExistence type="inferred from homology"/>
<organism>
    <name type="scientific">Candida glabrata (strain ATCC 2001 / BCRC 20586 / JCM 3761 / NBRC 0622 / NRRL Y-65 / CBS 138)</name>
    <name type="common">Yeast</name>
    <name type="synonym">Nakaseomyces glabratus</name>
    <dbReference type="NCBI Taxonomy" id="284593"/>
    <lineage>
        <taxon>Eukaryota</taxon>
        <taxon>Fungi</taxon>
        <taxon>Dikarya</taxon>
        <taxon>Ascomycota</taxon>
        <taxon>Saccharomycotina</taxon>
        <taxon>Saccharomycetes</taxon>
        <taxon>Saccharomycetales</taxon>
        <taxon>Saccharomycetaceae</taxon>
        <taxon>Nakaseomyces</taxon>
    </lineage>
</organism>
<sequence>MVKAVAVLRGSAGVSGVVTLEQASEQDPTTITYEIAGNDPNAERGFHIHEFGDVTNGCVSAGPHFNPFKKTHGAPQDENRHVGDLGNIKTDAQGVAKGVITDSLVKLIGPTSVVGRSVVVHAGTDDLGKGGNEESLKTGNAGPRPACGVIGLTN</sequence>
<name>SODC_CANGA</name>